<comment type="similarity">
    <text evidence="1">Belongs to the NifZ family.</text>
</comment>
<evidence type="ECO:0000305" key="1"/>
<protein>
    <recommendedName>
        <fullName>Protein NifZ</fullName>
    </recommendedName>
</protein>
<dbReference type="EMBL" id="M60090">
    <property type="protein sequence ID" value="AAA22165.1"/>
    <property type="molecule type" value="Genomic_DNA"/>
</dbReference>
<dbReference type="PIR" id="G43706">
    <property type="entry name" value="G43706"/>
</dbReference>
<dbReference type="GO" id="GO:0009399">
    <property type="term" value="P:nitrogen fixation"/>
    <property type="evidence" value="ECO:0007669"/>
    <property type="project" value="UniProtKB-KW"/>
</dbReference>
<dbReference type="InterPro" id="IPR007415">
    <property type="entry name" value="Nitrogenase_MoFe_mat_NifZ"/>
</dbReference>
<dbReference type="Pfam" id="PF04319">
    <property type="entry name" value="NifZ"/>
    <property type="match status" value="1"/>
</dbReference>
<name>NIFZ_AZOCH</name>
<feature type="chain" id="PRO_0000096836" description="Protein NifZ">
    <location>
        <begin position="1"/>
        <end position="158"/>
    </location>
</feature>
<keyword id="KW-0535">Nitrogen fixation</keyword>
<gene>
    <name type="primary">nifZ</name>
</gene>
<proteinExistence type="inferred from homology"/>
<sequence length="158" mass="17768">MLPQFEYGDEVRLIRNVRNDGTYPGMDTGALLIRRGAVGCVYDVGTYLQDQLIYRVHFLNEGRTVGCREEELILASAPWIPNLFEFRDNVIATRSLAVRGQVLVTRGQLGSIMKVLRDESELGIQYHVHFGDGLVLQVPEQSLVMAETEAAMEVLDEL</sequence>
<accession>P23124</accession>
<organism>
    <name type="scientific">Azotobacter chroococcum mcd 1</name>
    <dbReference type="NCBI Taxonomy" id="355"/>
    <lineage>
        <taxon>Bacteria</taxon>
        <taxon>Pseudomonadati</taxon>
        <taxon>Pseudomonadota</taxon>
        <taxon>Gammaproteobacteria</taxon>
        <taxon>Pseudomonadales</taxon>
        <taxon>Pseudomonadaceae</taxon>
        <taxon>Azotobacter</taxon>
    </lineage>
</organism>
<reference key="1">
    <citation type="journal article" date="1991" name="J. Bacteriol.">
        <title>Nucleotide sequence and genetic analysis of the Azotobacter chroococcum nifUSVWZM gene cluster, including a new gene (nifP) which encodes a serine acetyltransferase.</title>
        <authorList>
            <person name="Evans D.J."/>
            <person name="Jones R."/>
            <person name="Woodley P.R."/>
            <person name="Wilborn J.R."/>
            <person name="Robson R.L."/>
        </authorList>
    </citation>
    <scope>NUCLEOTIDE SEQUENCE [GENOMIC DNA]</scope>
</reference>